<accession>A1RJ17</accession>
<comment type="catalytic activity">
    <reaction evidence="1">
        <text>1-(5-phospho-beta-D-ribosyl)-5-[(5-phospho-beta-D-ribosylamino)methylideneamino]imidazole-4-carboxamide = 5-[(5-phospho-1-deoxy-D-ribulos-1-ylimino)methylamino]-1-(5-phospho-beta-D-ribosyl)imidazole-4-carboxamide</text>
        <dbReference type="Rhea" id="RHEA:15469"/>
        <dbReference type="ChEBI" id="CHEBI:58435"/>
        <dbReference type="ChEBI" id="CHEBI:58525"/>
        <dbReference type="EC" id="5.3.1.16"/>
    </reaction>
</comment>
<comment type="pathway">
    <text evidence="1">Amino-acid biosynthesis; L-histidine biosynthesis; L-histidine from 5-phospho-alpha-D-ribose 1-diphosphate: step 4/9.</text>
</comment>
<comment type="subcellular location">
    <subcellularLocation>
        <location evidence="1">Cytoplasm</location>
    </subcellularLocation>
</comment>
<comment type="similarity">
    <text evidence="1">Belongs to the HisA/HisF family.</text>
</comment>
<proteinExistence type="inferred from homology"/>
<protein>
    <recommendedName>
        <fullName evidence="1">1-(5-phosphoribosyl)-5-[(5-phosphoribosylamino)methylideneamino] imidazole-4-carboxamide isomerase</fullName>
        <ecNumber evidence="1">5.3.1.16</ecNumber>
    </recommendedName>
    <alternativeName>
        <fullName evidence="1">Phosphoribosylformimino-5-aminoimidazole carboxamide ribotide isomerase</fullName>
    </alternativeName>
</protein>
<evidence type="ECO:0000255" key="1">
    <source>
        <dbReference type="HAMAP-Rule" id="MF_01014"/>
    </source>
</evidence>
<reference key="1">
    <citation type="submission" date="2006-12" db="EMBL/GenBank/DDBJ databases">
        <title>Complete sequence of Shewanella sp. W3-18-1.</title>
        <authorList>
            <consortium name="US DOE Joint Genome Institute"/>
            <person name="Copeland A."/>
            <person name="Lucas S."/>
            <person name="Lapidus A."/>
            <person name="Barry K."/>
            <person name="Detter J.C."/>
            <person name="Glavina del Rio T."/>
            <person name="Hammon N."/>
            <person name="Israni S."/>
            <person name="Dalin E."/>
            <person name="Tice H."/>
            <person name="Pitluck S."/>
            <person name="Chain P."/>
            <person name="Malfatti S."/>
            <person name="Shin M."/>
            <person name="Vergez L."/>
            <person name="Schmutz J."/>
            <person name="Larimer F."/>
            <person name="Land M."/>
            <person name="Hauser L."/>
            <person name="Kyrpides N."/>
            <person name="Lykidis A."/>
            <person name="Tiedje J."/>
            <person name="Richardson P."/>
        </authorList>
    </citation>
    <scope>NUCLEOTIDE SEQUENCE [LARGE SCALE GENOMIC DNA]</scope>
    <source>
        <strain>W3-18-1</strain>
    </source>
</reference>
<organism>
    <name type="scientific">Shewanella sp. (strain W3-18-1)</name>
    <dbReference type="NCBI Taxonomy" id="351745"/>
    <lineage>
        <taxon>Bacteria</taxon>
        <taxon>Pseudomonadati</taxon>
        <taxon>Pseudomonadota</taxon>
        <taxon>Gammaproteobacteria</taxon>
        <taxon>Alteromonadales</taxon>
        <taxon>Shewanellaceae</taxon>
        <taxon>Shewanella</taxon>
    </lineage>
</organism>
<gene>
    <name evidence="1" type="primary">hisA</name>
    <name type="ordered locus">Sputw3181_1826</name>
</gene>
<sequence>MIIPAIDLIDGNVVRLYQGDYGQQTTFDLSPLAQLQSYEARGAKWLHIVDLTGAKDPAKRQTRLISELVAGLNANIQVGGGIRTEEQVTELLAIGVKRVVIGSLAVKEPELVKQWFIKYGSEAICLALDVNINQSGEKMVAVSGWQSGGGKSLESLVETFSAVGLKHALVTDISRDGTLTGANTALYQEIAASFPNIAWQASGGIATLEDVAAVRDSGAAGIIIGKALLINQFNVAEAIQCWPND</sequence>
<dbReference type="EC" id="5.3.1.16" evidence="1"/>
<dbReference type="EMBL" id="CP000503">
    <property type="protein sequence ID" value="ABM24662.1"/>
    <property type="molecule type" value="Genomic_DNA"/>
</dbReference>
<dbReference type="RefSeq" id="WP_011789158.1">
    <property type="nucleotide sequence ID" value="NC_008750.1"/>
</dbReference>
<dbReference type="SMR" id="A1RJ17"/>
<dbReference type="KEGG" id="shw:Sputw3181_1826"/>
<dbReference type="HOGENOM" id="CLU_048577_1_2_6"/>
<dbReference type="UniPathway" id="UPA00031">
    <property type="reaction ID" value="UER00009"/>
</dbReference>
<dbReference type="Proteomes" id="UP000002597">
    <property type="component" value="Chromosome"/>
</dbReference>
<dbReference type="GO" id="GO:0005737">
    <property type="term" value="C:cytoplasm"/>
    <property type="evidence" value="ECO:0007669"/>
    <property type="project" value="UniProtKB-SubCell"/>
</dbReference>
<dbReference type="GO" id="GO:0003949">
    <property type="term" value="F:1-(5-phosphoribosyl)-5-[(5-phosphoribosylamino)methylideneamino]imidazole-4-carboxamide isomerase activity"/>
    <property type="evidence" value="ECO:0007669"/>
    <property type="project" value="UniProtKB-UniRule"/>
</dbReference>
<dbReference type="GO" id="GO:0000105">
    <property type="term" value="P:L-histidine biosynthetic process"/>
    <property type="evidence" value="ECO:0007669"/>
    <property type="project" value="UniProtKB-UniRule"/>
</dbReference>
<dbReference type="GO" id="GO:0000162">
    <property type="term" value="P:L-tryptophan biosynthetic process"/>
    <property type="evidence" value="ECO:0007669"/>
    <property type="project" value="TreeGrafter"/>
</dbReference>
<dbReference type="CDD" id="cd04732">
    <property type="entry name" value="HisA"/>
    <property type="match status" value="1"/>
</dbReference>
<dbReference type="FunFam" id="3.20.20.70:FF:000009">
    <property type="entry name" value="1-(5-phosphoribosyl)-5-[(5-phosphoribosylamino)methylideneamino] imidazole-4-carboxamide isomerase"/>
    <property type="match status" value="1"/>
</dbReference>
<dbReference type="Gene3D" id="3.20.20.70">
    <property type="entry name" value="Aldolase class I"/>
    <property type="match status" value="1"/>
</dbReference>
<dbReference type="HAMAP" id="MF_01014">
    <property type="entry name" value="HisA"/>
    <property type="match status" value="1"/>
</dbReference>
<dbReference type="InterPro" id="IPR013785">
    <property type="entry name" value="Aldolase_TIM"/>
</dbReference>
<dbReference type="InterPro" id="IPR006062">
    <property type="entry name" value="His_biosynth"/>
</dbReference>
<dbReference type="InterPro" id="IPR006063">
    <property type="entry name" value="HisA_bact_arch"/>
</dbReference>
<dbReference type="InterPro" id="IPR044524">
    <property type="entry name" value="Isoase_HisA-like"/>
</dbReference>
<dbReference type="InterPro" id="IPR023016">
    <property type="entry name" value="Isoase_HisA-like_bact"/>
</dbReference>
<dbReference type="InterPro" id="IPR011060">
    <property type="entry name" value="RibuloseP-bd_barrel"/>
</dbReference>
<dbReference type="NCBIfam" id="TIGR00007">
    <property type="entry name" value="1-(5-phosphoribosyl)-5-[(5-phosphoribosylamino)methylideneamino]imidazole-4-carboxamide isomerase"/>
    <property type="match status" value="1"/>
</dbReference>
<dbReference type="PANTHER" id="PTHR43090">
    <property type="entry name" value="1-(5-PHOSPHORIBOSYL)-5-[(5-PHOSPHORIBOSYLAMINO)METHYLIDENEAMINO] IMIDAZOLE-4-CARBOXAMIDE ISOMERASE"/>
    <property type="match status" value="1"/>
</dbReference>
<dbReference type="PANTHER" id="PTHR43090:SF2">
    <property type="entry name" value="1-(5-PHOSPHORIBOSYL)-5-[(5-PHOSPHORIBOSYLAMINO)METHYLIDENEAMINO] IMIDAZOLE-4-CARBOXAMIDE ISOMERASE"/>
    <property type="match status" value="1"/>
</dbReference>
<dbReference type="Pfam" id="PF00977">
    <property type="entry name" value="His_biosynth"/>
    <property type="match status" value="1"/>
</dbReference>
<dbReference type="SUPFAM" id="SSF51366">
    <property type="entry name" value="Ribulose-phoshate binding barrel"/>
    <property type="match status" value="1"/>
</dbReference>
<keyword id="KW-0028">Amino-acid biosynthesis</keyword>
<keyword id="KW-0963">Cytoplasm</keyword>
<keyword id="KW-0368">Histidine biosynthesis</keyword>
<keyword id="KW-0413">Isomerase</keyword>
<feature type="chain" id="PRO_0000290541" description="1-(5-phosphoribosyl)-5-[(5-phosphoribosylamino)methylideneamino] imidazole-4-carboxamide isomerase">
    <location>
        <begin position="1"/>
        <end position="245"/>
    </location>
</feature>
<feature type="active site" description="Proton acceptor" evidence="1">
    <location>
        <position position="7"/>
    </location>
</feature>
<feature type="active site" description="Proton donor" evidence="1">
    <location>
        <position position="129"/>
    </location>
</feature>
<name>HIS4_SHESW</name>